<evidence type="ECO:0000255" key="1">
    <source>
        <dbReference type="HAMAP-Rule" id="MF_01328"/>
    </source>
</evidence>
<evidence type="ECO:0000256" key="2">
    <source>
        <dbReference type="SAM" id="MobiDB-lite"/>
    </source>
</evidence>
<evidence type="ECO:0000305" key="3"/>
<reference key="1">
    <citation type="journal article" date="2003" name="J. Bacteriol.">
        <title>Comparative analyses of the complete genome sequences of Pierce's disease and citrus variegated chlorosis strains of Xylella fastidiosa.</title>
        <authorList>
            <person name="Van Sluys M.A."/>
            <person name="de Oliveira M.C."/>
            <person name="Monteiro-Vitorello C.B."/>
            <person name="Miyaki C.Y."/>
            <person name="Furlan L.R."/>
            <person name="Camargo L.E.A."/>
            <person name="da Silva A.C.R."/>
            <person name="Moon D.H."/>
            <person name="Takita M.A."/>
            <person name="Lemos E.G.M."/>
            <person name="Machado M.A."/>
            <person name="Ferro M.I.T."/>
            <person name="da Silva F.R."/>
            <person name="Goldman M.H.S."/>
            <person name="Goldman G.H."/>
            <person name="Lemos M.V.F."/>
            <person name="El-Dorry H."/>
            <person name="Tsai S.M."/>
            <person name="Carrer H."/>
            <person name="Carraro D.M."/>
            <person name="de Oliveira R.C."/>
            <person name="Nunes L.R."/>
            <person name="Siqueira W.J."/>
            <person name="Coutinho L.L."/>
            <person name="Kimura E.T."/>
            <person name="Ferro E.S."/>
            <person name="Harakava R."/>
            <person name="Kuramae E.E."/>
            <person name="Marino C.L."/>
            <person name="Giglioti E."/>
            <person name="Abreu I.L."/>
            <person name="Alves L.M.C."/>
            <person name="do Amaral A.M."/>
            <person name="Baia G.S."/>
            <person name="Blanco S.R."/>
            <person name="Brito M.S."/>
            <person name="Cannavan F.S."/>
            <person name="Celestino A.V."/>
            <person name="da Cunha A.F."/>
            <person name="Fenille R.C."/>
            <person name="Ferro J.A."/>
            <person name="Formighieri E.F."/>
            <person name="Kishi L.T."/>
            <person name="Leoni S.G."/>
            <person name="Oliveira A.R."/>
            <person name="Rosa V.E. Jr."/>
            <person name="Sassaki F.T."/>
            <person name="Sena J.A.D."/>
            <person name="de Souza A.A."/>
            <person name="Truffi D."/>
            <person name="Tsukumo F."/>
            <person name="Yanai G.M."/>
            <person name="Zaros L.G."/>
            <person name="Civerolo E.L."/>
            <person name="Simpson A.J.G."/>
            <person name="Almeida N.F. Jr."/>
            <person name="Setubal J.C."/>
            <person name="Kitajima J.P."/>
        </authorList>
    </citation>
    <scope>NUCLEOTIDE SEQUENCE [LARGE SCALE GENOMIC DNA]</scope>
    <source>
        <strain>Temecula1 / ATCC 700964</strain>
    </source>
</reference>
<sequence>MDLTIVGSDNTLPVSDVVFGREFSEALVHQVVVAYRNTARSGTKAQKSRSQVSGTTKKSKKQKGGGARHGALTAPIFVGGGVAFAAKPRSFSQKVNRKQYRSAICSIFSELNRQGRLKVVDAFDVEVSKTRVFAEKIKSLEVVGSSLLIVSDEISECLSLSSRNLPCVDVRSVQALDPVALVGSDVVVLTVGAVKKIEEWLV</sequence>
<dbReference type="EMBL" id="AE009442">
    <property type="protein sequence ID" value="AAO28317.1"/>
    <property type="molecule type" value="Genomic_DNA"/>
</dbReference>
<dbReference type="RefSeq" id="WP_004090094.1">
    <property type="nucleotide sequence ID" value="NC_004556.1"/>
</dbReference>
<dbReference type="SMR" id="Q87E81"/>
<dbReference type="KEGG" id="xft:PD_0438"/>
<dbReference type="HOGENOM" id="CLU_041575_5_2_6"/>
<dbReference type="Proteomes" id="UP000002516">
    <property type="component" value="Chromosome"/>
</dbReference>
<dbReference type="GO" id="GO:1990904">
    <property type="term" value="C:ribonucleoprotein complex"/>
    <property type="evidence" value="ECO:0007669"/>
    <property type="project" value="UniProtKB-KW"/>
</dbReference>
<dbReference type="GO" id="GO:0005840">
    <property type="term" value="C:ribosome"/>
    <property type="evidence" value="ECO:0007669"/>
    <property type="project" value="UniProtKB-KW"/>
</dbReference>
<dbReference type="GO" id="GO:0019843">
    <property type="term" value="F:rRNA binding"/>
    <property type="evidence" value="ECO:0007669"/>
    <property type="project" value="UniProtKB-UniRule"/>
</dbReference>
<dbReference type="GO" id="GO:0003735">
    <property type="term" value="F:structural constituent of ribosome"/>
    <property type="evidence" value="ECO:0007669"/>
    <property type="project" value="InterPro"/>
</dbReference>
<dbReference type="GO" id="GO:0006412">
    <property type="term" value="P:translation"/>
    <property type="evidence" value="ECO:0007669"/>
    <property type="project" value="UniProtKB-UniRule"/>
</dbReference>
<dbReference type="Gene3D" id="3.40.1370.10">
    <property type="match status" value="1"/>
</dbReference>
<dbReference type="HAMAP" id="MF_01328_B">
    <property type="entry name" value="Ribosomal_uL4_B"/>
    <property type="match status" value="1"/>
</dbReference>
<dbReference type="InterPro" id="IPR002136">
    <property type="entry name" value="Ribosomal_uL4"/>
</dbReference>
<dbReference type="InterPro" id="IPR013005">
    <property type="entry name" value="Ribosomal_uL4-like"/>
</dbReference>
<dbReference type="InterPro" id="IPR023574">
    <property type="entry name" value="Ribosomal_uL4_dom_sf"/>
</dbReference>
<dbReference type="NCBIfam" id="TIGR03953">
    <property type="entry name" value="rplD_bact"/>
    <property type="match status" value="1"/>
</dbReference>
<dbReference type="PANTHER" id="PTHR10746">
    <property type="entry name" value="50S RIBOSOMAL PROTEIN L4"/>
    <property type="match status" value="1"/>
</dbReference>
<dbReference type="PANTHER" id="PTHR10746:SF6">
    <property type="entry name" value="LARGE RIBOSOMAL SUBUNIT PROTEIN UL4M"/>
    <property type="match status" value="1"/>
</dbReference>
<dbReference type="Pfam" id="PF00573">
    <property type="entry name" value="Ribosomal_L4"/>
    <property type="match status" value="1"/>
</dbReference>
<dbReference type="SUPFAM" id="SSF52166">
    <property type="entry name" value="Ribosomal protein L4"/>
    <property type="match status" value="1"/>
</dbReference>
<comment type="function">
    <text evidence="1">One of the primary rRNA binding proteins, this protein initially binds near the 5'-end of the 23S rRNA. It is important during the early stages of 50S assembly. It makes multiple contacts with different domains of the 23S rRNA in the assembled 50S subunit and ribosome.</text>
</comment>
<comment type="function">
    <text evidence="1">Forms part of the polypeptide exit tunnel.</text>
</comment>
<comment type="subunit">
    <text evidence="1">Part of the 50S ribosomal subunit.</text>
</comment>
<comment type="similarity">
    <text evidence="1">Belongs to the universal ribosomal protein uL4 family.</text>
</comment>
<accession>Q87E81</accession>
<keyword id="KW-1185">Reference proteome</keyword>
<keyword id="KW-0687">Ribonucleoprotein</keyword>
<keyword id="KW-0689">Ribosomal protein</keyword>
<keyword id="KW-0694">RNA-binding</keyword>
<keyword id="KW-0699">rRNA-binding</keyword>
<proteinExistence type="inferred from homology"/>
<name>RL4_XYLFT</name>
<gene>
    <name evidence="1" type="primary">rplD</name>
    <name type="ordered locus">PD_0438</name>
</gene>
<protein>
    <recommendedName>
        <fullName evidence="1">Large ribosomal subunit protein uL4</fullName>
    </recommendedName>
    <alternativeName>
        <fullName evidence="3">50S ribosomal protein L4</fullName>
    </alternativeName>
</protein>
<organism>
    <name type="scientific">Xylella fastidiosa (strain Temecula1 / ATCC 700964)</name>
    <dbReference type="NCBI Taxonomy" id="183190"/>
    <lineage>
        <taxon>Bacteria</taxon>
        <taxon>Pseudomonadati</taxon>
        <taxon>Pseudomonadota</taxon>
        <taxon>Gammaproteobacteria</taxon>
        <taxon>Lysobacterales</taxon>
        <taxon>Lysobacteraceae</taxon>
        <taxon>Xylella</taxon>
    </lineage>
</organism>
<feature type="chain" id="PRO_0000129318" description="Large ribosomal subunit protein uL4">
    <location>
        <begin position="1"/>
        <end position="202"/>
    </location>
</feature>
<feature type="region of interest" description="Disordered" evidence="2">
    <location>
        <begin position="42"/>
        <end position="70"/>
    </location>
</feature>
<feature type="compositionally biased region" description="Polar residues" evidence="2">
    <location>
        <begin position="42"/>
        <end position="52"/>
    </location>
</feature>